<evidence type="ECO:0000255" key="1">
    <source>
        <dbReference type="PROSITE-ProRule" id="PRU00153"/>
    </source>
</evidence>
<evidence type="ECO:0000256" key="2">
    <source>
        <dbReference type="SAM" id="MobiDB-lite"/>
    </source>
</evidence>
<evidence type="ECO:0000269" key="3">
    <source>
    </source>
</evidence>
<evidence type="ECO:0000269" key="4">
    <source>
    </source>
</evidence>
<evidence type="ECO:0000269" key="5">
    <source>
    </source>
</evidence>
<evidence type="ECO:0000305" key="6"/>
<evidence type="ECO:0007744" key="7">
    <source>
    </source>
</evidence>
<evidence type="ECO:0007744" key="8">
    <source>
    </source>
</evidence>
<evidence type="ECO:0007744" key="9">
    <source>
    </source>
</evidence>
<evidence type="ECO:0007744" key="10">
    <source>
    </source>
</evidence>
<gene>
    <name type="primary">SPO14</name>
    <name type="synonym">PLD1</name>
    <name type="ordered locus">YKR031C</name>
</gene>
<reference key="1">
    <citation type="journal article" date="1992" name="Genetics">
        <title>Commitment to meiosis in Saccharomyces cerevisiae: involvement of the SPO14 gene.</title>
        <authorList>
            <person name="Honigberg S.M."/>
            <person name="Conicella C."/>
            <person name="Espositio R.E."/>
        </authorList>
    </citation>
    <scope>NUCLEOTIDE SEQUENCE [GENOMIC DNA]</scope>
    <scope>FUNCTION</scope>
</reference>
<reference key="2">
    <citation type="journal article" date="1994" name="Nature">
        <title>Complete DNA sequence of yeast chromosome XI.</title>
        <authorList>
            <person name="Dujon B."/>
            <person name="Alexandraki D."/>
            <person name="Andre B."/>
            <person name="Ansorge W."/>
            <person name="Baladron V."/>
            <person name="Ballesta J.P.G."/>
            <person name="Banrevi A."/>
            <person name="Bolle P.-A."/>
            <person name="Bolotin-Fukuhara M."/>
            <person name="Bossier P."/>
            <person name="Bou G."/>
            <person name="Boyer J."/>
            <person name="Buitrago M.J."/>
            <person name="Cheret G."/>
            <person name="Colleaux L."/>
            <person name="Daignan-Fornier B."/>
            <person name="del Rey F."/>
            <person name="Dion C."/>
            <person name="Domdey H."/>
            <person name="Duesterhoeft A."/>
            <person name="Duesterhus S."/>
            <person name="Entian K.-D."/>
            <person name="Erfle H."/>
            <person name="Esteban P.F."/>
            <person name="Feldmann H."/>
            <person name="Fernandes L."/>
            <person name="Fobo G.M."/>
            <person name="Fritz C."/>
            <person name="Fukuhara H."/>
            <person name="Gabel C."/>
            <person name="Gaillon L."/>
            <person name="Garcia-Cantalejo J.M."/>
            <person name="Garcia-Ramirez J.J."/>
            <person name="Gent M.E."/>
            <person name="Ghazvini M."/>
            <person name="Goffeau A."/>
            <person name="Gonzalez A."/>
            <person name="Grothues D."/>
            <person name="Guerreiro P."/>
            <person name="Hegemann J.H."/>
            <person name="Hewitt N."/>
            <person name="Hilger F."/>
            <person name="Hollenberg C.P."/>
            <person name="Horaitis O."/>
            <person name="Indge K.J."/>
            <person name="Jacquier A."/>
            <person name="James C.M."/>
            <person name="Jauniaux J.-C."/>
            <person name="Jimenez A."/>
            <person name="Keuchel H."/>
            <person name="Kirchrath L."/>
            <person name="Kleine K."/>
            <person name="Koetter P."/>
            <person name="Legrain P."/>
            <person name="Liebl S."/>
            <person name="Louis E.J."/>
            <person name="Maia e Silva A."/>
            <person name="Marck C."/>
            <person name="Monnier A.-L."/>
            <person name="Moestl D."/>
            <person name="Mueller S."/>
            <person name="Obermaier B."/>
            <person name="Oliver S.G."/>
            <person name="Pallier C."/>
            <person name="Pascolo S."/>
            <person name="Pfeiffer F."/>
            <person name="Philippsen P."/>
            <person name="Planta R.J."/>
            <person name="Pohl F.M."/>
            <person name="Pohl T.M."/>
            <person name="Poehlmann R."/>
            <person name="Portetelle D."/>
            <person name="Purnelle B."/>
            <person name="Puzos V."/>
            <person name="Ramezani Rad M."/>
            <person name="Rasmussen S.W."/>
            <person name="Remacha M.A."/>
            <person name="Revuelta J.L."/>
            <person name="Richard G.-F."/>
            <person name="Rieger M."/>
            <person name="Rodrigues-Pousada C."/>
            <person name="Rose M."/>
            <person name="Rupp T."/>
            <person name="Santos M.A."/>
            <person name="Schwager C."/>
            <person name="Sensen C."/>
            <person name="Skala J."/>
            <person name="Soares H."/>
            <person name="Sor F."/>
            <person name="Stegemann J."/>
            <person name="Tettelin H."/>
            <person name="Thierry A."/>
            <person name="Tzermia M."/>
            <person name="Urrestarazu L.A."/>
            <person name="van Dyck L."/>
            <person name="van Vliet-Reedijk J.C."/>
            <person name="Valens M."/>
            <person name="Vandenbol M."/>
            <person name="Vilela C."/>
            <person name="Vissers S."/>
            <person name="von Wettstein D."/>
            <person name="Voss H."/>
            <person name="Wiemann S."/>
            <person name="Xu G."/>
            <person name="Zimmermann J."/>
            <person name="Haasemann M."/>
            <person name="Becker I."/>
            <person name="Mewes H.-W."/>
        </authorList>
    </citation>
    <scope>NUCLEOTIDE SEQUENCE [LARGE SCALE GENOMIC DNA]</scope>
    <source>
        <strain>ATCC 204508 / S288c</strain>
    </source>
</reference>
<reference key="3">
    <citation type="journal article" date="2014" name="G3 (Bethesda)">
        <title>The reference genome sequence of Saccharomyces cerevisiae: Then and now.</title>
        <authorList>
            <person name="Engel S.R."/>
            <person name="Dietrich F.S."/>
            <person name="Fisk D.G."/>
            <person name="Binkley G."/>
            <person name="Balakrishnan R."/>
            <person name="Costanzo M.C."/>
            <person name="Dwight S.S."/>
            <person name="Hitz B.C."/>
            <person name="Karra K."/>
            <person name="Nash R.S."/>
            <person name="Weng S."/>
            <person name="Wong E.D."/>
            <person name="Lloyd P."/>
            <person name="Skrzypek M.S."/>
            <person name="Miyasato S.R."/>
            <person name="Simison M."/>
            <person name="Cherry J.M."/>
        </authorList>
    </citation>
    <scope>GENOME REANNOTATION</scope>
    <source>
        <strain>ATCC 204508 / S288c</strain>
    </source>
</reference>
<reference key="4">
    <citation type="journal article" date="1995" name="Proc. Natl. Acad. Sci. U.S.A.">
        <title>Phospholipase D signaling is essential for meiosis.</title>
        <authorList>
            <person name="Rose K."/>
            <person name="Rudge S.A."/>
            <person name="Frohman M.A."/>
            <person name="Morris A.J."/>
            <person name="Engebrecht J."/>
        </authorList>
    </citation>
    <scope>CHARACTERIZATION AS A PLD</scope>
</reference>
<reference key="5">
    <citation type="journal article" date="1996" name="J. Biol. Chem.">
        <title>Identification and characterization of a gene encoding phospholipase D activity in yeast.</title>
        <authorList>
            <person name="Waksman M."/>
            <person name="Eli Y."/>
            <person name="Liscovitch M."/>
            <person name="Gerst J.E."/>
        </authorList>
    </citation>
    <scope>CHARACTERIZATION AS A PLD</scope>
</reference>
<reference key="6">
    <citation type="journal article" date="2003" name="Nature">
        <title>Global analysis of protein expression in yeast.</title>
        <authorList>
            <person name="Ghaemmaghami S."/>
            <person name="Huh W.-K."/>
            <person name="Bower K."/>
            <person name="Howson R.W."/>
            <person name="Belle A."/>
            <person name="Dephoure N."/>
            <person name="O'Shea E.K."/>
            <person name="Weissman J.S."/>
        </authorList>
    </citation>
    <scope>LEVEL OF PROTEIN EXPRESSION [LARGE SCALE ANALYSIS]</scope>
</reference>
<reference key="7">
    <citation type="journal article" date="2005" name="Mol. Cell. Proteomics">
        <title>Quantitative phosphoproteomics applied to the yeast pheromone signaling pathway.</title>
        <authorList>
            <person name="Gruhler A."/>
            <person name="Olsen J.V."/>
            <person name="Mohammed S."/>
            <person name="Mortensen P."/>
            <person name="Faergeman N.J."/>
            <person name="Mann M."/>
            <person name="Jensen O.N."/>
        </authorList>
    </citation>
    <scope>ACETYLATION [LARGE SCALE ANALYSIS] AT SER-2</scope>
    <scope>PHOSPHORYLATION [LARGE SCALE ANALYSIS] AT SER-8</scope>
    <scope>CLEAVAGE OF INITIATOR METHIONINE [LARGE SCALE ANALYSIS]</scope>
    <scope>IDENTIFICATION BY MASS SPECTROMETRY [LARGE SCALE ANALYSIS]</scope>
    <source>
        <strain>YAL6B</strain>
    </source>
</reference>
<reference key="8">
    <citation type="journal article" date="2007" name="J. Proteome Res.">
        <title>Large-scale phosphorylation analysis of alpha-factor-arrested Saccharomyces cerevisiae.</title>
        <authorList>
            <person name="Li X."/>
            <person name="Gerber S.A."/>
            <person name="Rudner A.D."/>
            <person name="Beausoleil S.A."/>
            <person name="Haas W."/>
            <person name="Villen J."/>
            <person name="Elias J.E."/>
            <person name="Gygi S.P."/>
        </authorList>
    </citation>
    <scope>IDENTIFICATION BY MASS SPECTROMETRY [LARGE SCALE ANALYSIS]</scope>
    <source>
        <strain>ADR376</strain>
    </source>
</reference>
<reference key="9">
    <citation type="journal article" date="2008" name="Mol. Cell. Proteomics">
        <title>A multidimensional chromatography technology for in-depth phosphoproteome analysis.</title>
        <authorList>
            <person name="Albuquerque C.P."/>
            <person name="Smolka M.B."/>
            <person name="Payne S.H."/>
            <person name="Bafna V."/>
            <person name="Eng J."/>
            <person name="Zhou H."/>
        </authorList>
    </citation>
    <scope>PHOSPHORYLATION [LARGE SCALE ANALYSIS] AT SER-30</scope>
    <scope>IDENTIFICATION BY MASS SPECTROMETRY [LARGE SCALE ANALYSIS]</scope>
</reference>
<reference key="10">
    <citation type="journal article" date="2009" name="Science">
        <title>Global analysis of Cdk1 substrate phosphorylation sites provides insights into evolution.</title>
        <authorList>
            <person name="Holt L.J."/>
            <person name="Tuch B.B."/>
            <person name="Villen J."/>
            <person name="Johnson A.D."/>
            <person name="Gygi S.P."/>
            <person name="Morgan D.O."/>
        </authorList>
    </citation>
    <scope>PHOSPHORYLATION [LARGE SCALE ANALYSIS] AT SER-30; SER-145; SER-1461 AND THR-1462</scope>
    <scope>IDENTIFICATION BY MASS SPECTROMETRY [LARGE SCALE ANALYSIS]</scope>
</reference>
<reference key="11">
    <citation type="journal article" date="2011" name="PLoS Genet.">
        <title>Srf1 is a novel regulator of phospholipase D activity and is essential to buffer the toxic effects of C16:0 platelet activating factor.</title>
        <authorList>
            <person name="Kennedy M.A."/>
            <person name="Kabbani N."/>
            <person name="Lambert J.P."/>
            <person name="Swayne L.A."/>
            <person name="Ahmed F."/>
            <person name="Figeys D."/>
            <person name="Bennett S.A."/>
            <person name="Bryan J."/>
            <person name="Baetz K."/>
        </authorList>
    </citation>
    <scope>FUNCTION</scope>
    <scope>ACTIVITY REGULATION</scope>
    <scope>INTERACTION WITH SRF1</scope>
</reference>
<reference key="12">
    <citation type="journal article" date="2012" name="Proc. Natl. Acad. Sci. U.S.A.">
        <title>N-terminal acetylome analyses and functional insights of the N-terminal acetyltransferase NatB.</title>
        <authorList>
            <person name="Van Damme P."/>
            <person name="Lasa M."/>
            <person name="Polevoda B."/>
            <person name="Gazquez C."/>
            <person name="Elosegui-Artola A."/>
            <person name="Kim D.S."/>
            <person name="De Juan-Pardo E."/>
            <person name="Demeyer K."/>
            <person name="Hole K."/>
            <person name="Larrea E."/>
            <person name="Timmerman E."/>
            <person name="Prieto J."/>
            <person name="Arnesen T."/>
            <person name="Sherman F."/>
            <person name="Gevaert K."/>
            <person name="Aldabe R."/>
        </authorList>
    </citation>
    <scope>ACETYLATION [LARGE SCALE ANALYSIS] AT SER-2</scope>
    <scope>CLEAVAGE OF INITIATOR METHIONINE [LARGE SCALE ANALYSIS]</scope>
    <scope>IDENTIFICATION BY MASS SPECTROMETRY [LARGE SCALE ANALYSIS]</scope>
</reference>
<organism>
    <name type="scientific">Saccharomyces cerevisiae (strain ATCC 204508 / S288c)</name>
    <name type="common">Baker's yeast</name>
    <dbReference type="NCBI Taxonomy" id="559292"/>
    <lineage>
        <taxon>Eukaryota</taxon>
        <taxon>Fungi</taxon>
        <taxon>Dikarya</taxon>
        <taxon>Ascomycota</taxon>
        <taxon>Saccharomycotina</taxon>
        <taxon>Saccharomycetes</taxon>
        <taxon>Saccharomycetales</taxon>
        <taxon>Saccharomycetaceae</taxon>
        <taxon>Saccharomyces</taxon>
    </lineage>
</organism>
<dbReference type="EC" id="3.1.4.4"/>
<dbReference type="EMBL" id="L46807">
    <property type="protein sequence ID" value="AAA74938.1"/>
    <property type="status" value="ALT_INIT"/>
    <property type="molecule type" value="Genomic_DNA"/>
</dbReference>
<dbReference type="EMBL" id="Z28256">
    <property type="protein sequence ID" value="CAA82103.1"/>
    <property type="molecule type" value="Genomic_DNA"/>
</dbReference>
<dbReference type="EMBL" id="BK006944">
    <property type="protein sequence ID" value="DAA09186.1"/>
    <property type="molecule type" value="Genomic_DNA"/>
</dbReference>
<dbReference type="PIR" id="S38103">
    <property type="entry name" value="S38103"/>
</dbReference>
<dbReference type="RefSeq" id="NP_012956.3">
    <property type="nucleotide sequence ID" value="NM_001179821.3"/>
</dbReference>
<dbReference type="SMR" id="P36126"/>
<dbReference type="BioGRID" id="34164">
    <property type="interactions" value="115"/>
</dbReference>
<dbReference type="DIP" id="DIP-2643N"/>
<dbReference type="FunCoup" id="P36126">
    <property type="interactions" value="187"/>
</dbReference>
<dbReference type="IntAct" id="P36126">
    <property type="interactions" value="8"/>
</dbReference>
<dbReference type="MINT" id="P36126"/>
<dbReference type="STRING" id="4932.YKR031C"/>
<dbReference type="SwissLipids" id="SLP:000000072"/>
<dbReference type="GlyGen" id="P36126">
    <property type="glycosylation" value="1 site"/>
</dbReference>
<dbReference type="iPTMnet" id="P36126"/>
<dbReference type="PaxDb" id="4932-YKR031C"/>
<dbReference type="PeptideAtlas" id="P36126"/>
<dbReference type="EnsemblFungi" id="YKR031C_mRNA">
    <property type="protein sequence ID" value="YKR031C"/>
    <property type="gene ID" value="YKR031C"/>
</dbReference>
<dbReference type="GeneID" id="853902"/>
<dbReference type="KEGG" id="sce:YKR031C"/>
<dbReference type="AGR" id="SGD:S000001739"/>
<dbReference type="SGD" id="S000001739">
    <property type="gene designation" value="SPO14"/>
</dbReference>
<dbReference type="VEuPathDB" id="FungiDB:YKR031C"/>
<dbReference type="eggNOG" id="KOG1329">
    <property type="taxonomic scope" value="Eukaryota"/>
</dbReference>
<dbReference type="HOGENOM" id="CLU_000690_3_0_1"/>
<dbReference type="InParanoid" id="P36126"/>
<dbReference type="OMA" id="DSLWTKH"/>
<dbReference type="OrthoDB" id="14911at2759"/>
<dbReference type="BioCyc" id="YEAST:YKR031C-MONOMER"/>
<dbReference type="BRENDA" id="3.1.4.4">
    <property type="organism ID" value="984"/>
</dbReference>
<dbReference type="Reactome" id="R-SCE-1483166">
    <property type="pathway name" value="Synthesis of PA"/>
</dbReference>
<dbReference type="Reactome" id="R-SCE-2029485">
    <property type="pathway name" value="Role of phospholipids in phagocytosis"/>
</dbReference>
<dbReference type="Reactome" id="R-SCE-6798695">
    <property type="pathway name" value="Neutrophil degranulation"/>
</dbReference>
<dbReference type="Reactome" id="R-SCE-8980692">
    <property type="pathway name" value="RHOA GTPase cycle"/>
</dbReference>
<dbReference type="BioGRID-ORCS" id="853902">
    <property type="hits" value="1 hit in 10 CRISPR screens"/>
</dbReference>
<dbReference type="CD-CODE" id="876000F7">
    <property type="entry name" value="Centrosome"/>
</dbReference>
<dbReference type="PRO" id="PR:P36126"/>
<dbReference type="Proteomes" id="UP000002311">
    <property type="component" value="Chromosome XI"/>
</dbReference>
<dbReference type="RNAct" id="P36126">
    <property type="molecule type" value="protein"/>
</dbReference>
<dbReference type="GO" id="GO:0005768">
    <property type="term" value="C:endosome"/>
    <property type="evidence" value="ECO:0000314"/>
    <property type="project" value="SGD"/>
</dbReference>
<dbReference type="GO" id="GO:0005634">
    <property type="term" value="C:nucleus"/>
    <property type="evidence" value="ECO:0000314"/>
    <property type="project" value="SGD"/>
</dbReference>
<dbReference type="GO" id="GO:0005628">
    <property type="term" value="C:prospore membrane"/>
    <property type="evidence" value="ECO:0000314"/>
    <property type="project" value="SGD"/>
</dbReference>
<dbReference type="GO" id="GO:0032266">
    <property type="term" value="F:phosphatidylinositol-3-phosphate binding"/>
    <property type="evidence" value="ECO:0000314"/>
    <property type="project" value="SGD"/>
</dbReference>
<dbReference type="GO" id="GO:0004630">
    <property type="term" value="F:phospholipase D activity"/>
    <property type="evidence" value="ECO:0000314"/>
    <property type="project" value="SGD"/>
</dbReference>
<dbReference type="GO" id="GO:0031321">
    <property type="term" value="P:ascospore-type prospore assembly"/>
    <property type="evidence" value="ECO:0000315"/>
    <property type="project" value="SGD"/>
</dbReference>
<dbReference type="GO" id="GO:0000753">
    <property type="term" value="P:cell morphogenesis involved in conjugation with cellular fusion"/>
    <property type="evidence" value="ECO:0000315"/>
    <property type="project" value="SGD"/>
</dbReference>
<dbReference type="GO" id="GO:0035556">
    <property type="term" value="P:intracellular signal transduction"/>
    <property type="evidence" value="ECO:0007669"/>
    <property type="project" value="InterPro"/>
</dbReference>
<dbReference type="GO" id="GO:0006654">
    <property type="term" value="P:phosphatidic acid biosynthetic process"/>
    <property type="evidence" value="ECO:0007669"/>
    <property type="project" value="InterPro"/>
</dbReference>
<dbReference type="GO" id="GO:0009395">
    <property type="term" value="P:phospholipid catabolic process"/>
    <property type="evidence" value="ECO:0000318"/>
    <property type="project" value="GO_Central"/>
</dbReference>
<dbReference type="GO" id="GO:0006644">
    <property type="term" value="P:phospholipid metabolic process"/>
    <property type="evidence" value="ECO:0000314"/>
    <property type="project" value="SGD"/>
</dbReference>
<dbReference type="CDD" id="cd01254">
    <property type="entry name" value="PH_PLD"/>
    <property type="match status" value="1"/>
</dbReference>
<dbReference type="CDD" id="cd09138">
    <property type="entry name" value="PLDc_vPLD1_2_yPLD_like_1"/>
    <property type="match status" value="1"/>
</dbReference>
<dbReference type="CDD" id="cd09141">
    <property type="entry name" value="PLDc_vPLD1_2_yPLD_like_2"/>
    <property type="match status" value="1"/>
</dbReference>
<dbReference type="FunFam" id="3.30.870.10:FF:000011">
    <property type="entry name" value="Phospholipase"/>
    <property type="match status" value="1"/>
</dbReference>
<dbReference type="Gene3D" id="3.30.870.10">
    <property type="entry name" value="Endonuclease Chain A"/>
    <property type="match status" value="2"/>
</dbReference>
<dbReference type="InterPro" id="IPR001849">
    <property type="entry name" value="PH_domain"/>
</dbReference>
<dbReference type="InterPro" id="IPR001736">
    <property type="entry name" value="PLipase_D/transphosphatidylase"/>
</dbReference>
<dbReference type="InterPro" id="IPR016555">
    <property type="entry name" value="PLipase_D_euk"/>
</dbReference>
<dbReference type="InterPro" id="IPR015679">
    <property type="entry name" value="PLipase_D_fam"/>
</dbReference>
<dbReference type="InterPro" id="IPR001683">
    <property type="entry name" value="PX_dom"/>
</dbReference>
<dbReference type="InterPro" id="IPR036871">
    <property type="entry name" value="PX_dom_sf"/>
</dbReference>
<dbReference type="PANTHER" id="PTHR18896:SF76">
    <property type="entry name" value="PHOSPHOLIPASE"/>
    <property type="match status" value="1"/>
</dbReference>
<dbReference type="PANTHER" id="PTHR18896">
    <property type="entry name" value="PHOSPHOLIPASE D"/>
    <property type="match status" value="1"/>
</dbReference>
<dbReference type="Pfam" id="PF00614">
    <property type="entry name" value="PLDc"/>
    <property type="match status" value="2"/>
</dbReference>
<dbReference type="PIRSF" id="PIRSF009376">
    <property type="entry name" value="Phospholipase_D_euk"/>
    <property type="match status" value="1"/>
</dbReference>
<dbReference type="SMART" id="SM00233">
    <property type="entry name" value="PH"/>
    <property type="match status" value="1"/>
</dbReference>
<dbReference type="SMART" id="SM00155">
    <property type="entry name" value="PLDc"/>
    <property type="match status" value="2"/>
</dbReference>
<dbReference type="SMART" id="SM00312">
    <property type="entry name" value="PX"/>
    <property type="match status" value="1"/>
</dbReference>
<dbReference type="SUPFAM" id="SSF56024">
    <property type="entry name" value="Phospholipase D/nuclease"/>
    <property type="match status" value="2"/>
</dbReference>
<dbReference type="SUPFAM" id="SSF64268">
    <property type="entry name" value="PX domain"/>
    <property type="match status" value="1"/>
</dbReference>
<dbReference type="PROSITE" id="PS50035">
    <property type="entry name" value="PLD"/>
    <property type="match status" value="2"/>
</dbReference>
<proteinExistence type="evidence at protein level"/>
<keyword id="KW-0007">Acetylation</keyword>
<keyword id="KW-0378">Hydrolase</keyword>
<keyword id="KW-0442">Lipid degradation</keyword>
<keyword id="KW-0443">Lipid metabolism</keyword>
<keyword id="KW-0469">Meiosis</keyword>
<keyword id="KW-0597">Phosphoprotein</keyword>
<keyword id="KW-1185">Reference proteome</keyword>
<keyword id="KW-0677">Repeat</keyword>
<keyword id="KW-0749">Sporulation</keyword>
<comment type="function">
    <text evidence="4 5">Required for meiosis and spore formation. Seems to be involved in the coordinate induction of late meiotic events. PLD activity is induced under sporulation conditions and seems to be necessary to complete the meiotic cycle, but not for vegetative cell growth.</text>
</comment>
<comment type="catalytic activity">
    <reaction>
        <text>a 1,2-diacyl-sn-glycero-3-phosphocholine + H2O = a 1,2-diacyl-sn-glycero-3-phosphate + choline + H(+)</text>
        <dbReference type="Rhea" id="RHEA:14445"/>
        <dbReference type="ChEBI" id="CHEBI:15354"/>
        <dbReference type="ChEBI" id="CHEBI:15377"/>
        <dbReference type="ChEBI" id="CHEBI:15378"/>
        <dbReference type="ChEBI" id="CHEBI:57643"/>
        <dbReference type="ChEBI" id="CHEBI:58608"/>
        <dbReference type="EC" id="3.1.4.4"/>
    </reaction>
</comment>
<comment type="activity regulation">
    <text evidence="5">Activity is dependent of phosphatidylinositol 4,5-bisphosphate and the regulator SRF1. Inhibited by magnesium.</text>
</comment>
<comment type="subunit">
    <text evidence="5">Interacts with SRF1.</text>
</comment>
<comment type="miscellaneous">
    <text evidence="3">Present with 49 molecules/cell in log phase SD medium.</text>
</comment>
<comment type="similarity">
    <text evidence="6">Belongs to the phospholipase D family.</text>
</comment>
<comment type="sequence caution" evidence="6">
    <conflict type="erroneous initiation">
        <sequence resource="EMBL-CDS" id="AAA74938"/>
    </conflict>
    <text>Truncated N-terminus.</text>
</comment>
<sequence>MSNVSTASGTHFAPPQADRSVTEEVDRVNSRPDELENQEVLRQLPENGNLTSSLQREKRRTPNGKEAERKHALPKSFVDRNLSDVSPNHSLDHIMHSNEHDPRRGSDEENMHRLYNNLHSSNNNVHSKRNSKREEERAPQRRSSSVAYTQQQFNGWKKEFGHAFKKISAIGRLKSSVNSPTPAGSGHRHNQHQHQQVNEEDLYTQRLASDLLDSLLAGCPASLFASTQFLRDEHGKRRAPLLLAKLDVRVSPLKNDNNILDITNSNHNHRGNNNNNTGENSDRRPSIPRSSSIISISSNVAEFMYSRNENSLFRIHLEYGIDEDRLKWSIIRSYKDIKSLHHKLKIVAFQQLTISKLYSDNNRYHSLQLPHFPHYKEMVKERNVMEKKAENKPSSAASAPHTSENNNNDNGSNITSLETLSSSEISEFNIDNVKMKHLQDLIDEPDDFSQPIHLRLERYLRLLNIALCLRPHANRLFEFYELSPLGNLLSRESGFQGKQGYLVIRSTAKAQGWRVSHFGKHAFKDMIDRHTTKWFLVRNSYLTYVSDLSSTTPLDVFLIDWKFKVRFSGNKNNILDNENEINWIIHDPNLEINDELEEFGIENDANNILDKNGKSKTHQKKSNISSKLLLLTLENSERKLKIICKSESSLKQWMSSIIKMSTSTPWSKPNRFGSFAPVRTNSFCKFLVDGRDYFWSLSEALLMAKDVIYIHDWWLSPELYLRRPVKGNQGFRIDRMLKSCAEKGIKIFIVIYRNVGNIVGTDSLWTKHSMLNLHPNIHIIRSPNQWLQNTYFWAHHEKFVVIDETFAFIGGTDLCYGRYDTFEHVLRDDAESLLDQNFPGKDYSNARIADFHDLDKPFESMYDRKVIPRMPWHDVQMMTLGEPARDLARHFVQRWNYLLRAKRPSRLTPLLTPPSDLTAEELKSLPMFEILREKSTCETQILRSAGNWSLGLKETECSIQNAYLKLIEQSEHFIYIENQFFITSTVWNGTCVLNKIGDALVDRIVKANQEKKPWKAFILIPLMPGFDSPVDTAEASSLRLIMQFQYQSISRGEHSTFSKLKKLNIDPAQYIQFFSLRKWSTFAPNERLITEQLYVHAKILIADDRRCIIGSANINERSQLGNRDSEVAILIRDTDLIKTKMNGDDYYAGKFPWELRQRLMREHLGCDVDLVEFVEKKFERFEKFAAKNYEKLHTLSKEGDSGNNWSDREMIDSAMIELGYREIFGCKFSPQWKSGHGNSVDDGSTQCGINEKEVGREDENVYEKFFNSVDYGKSSRKRTPLPKHNFASLGLTFNHRAGIENVGIRDHKVLSTDPRLRKNDEHKKEVDGYGPDCWKKESNKKFKADATEQLKEWALNSLASKVLDDKEMIKSEIPEGFSNYLPNEKDLEMYLTDKTVTNRNKWSMLKRICYLQYLSHKLDERKTQRLKKIKDMRRHLSSSTESTRNGSNSLPLNEKSNEGESTNVDQDIEGDEYHRLHEDILKNQELDDGSLDDLLSQIIPKITNFNSGEIDDAKKEELLKLNFIDPYSFEDPLISSFSEGLWFTIALRNTLLYKLVFHCQPDNAVQNWKEYGEFTELEQEFQINQEKLIDLEAENINSTTTNVVDKDREKEKMRKAAELRMKLSGSLLYGFNQKVFDKHTAQRILERIHGHLVIFPTEWLAKEVESRNWIFNSDRLSPMEIYN</sequence>
<protein>
    <recommendedName>
        <fullName>Phospholipase D1</fullName>
        <shortName>PLD 1</shortName>
        <ecNumber>3.1.4.4</ecNumber>
    </recommendedName>
    <alternativeName>
        <fullName>Choline phosphatase 1</fullName>
    </alternativeName>
    <alternativeName>
        <fullName>Meiosis-specific sporulation-specific protein 14</fullName>
    </alternativeName>
    <alternativeName>
        <fullName>Phosphatidylcholine-hydrolyzing phospholipase D1</fullName>
    </alternativeName>
</protein>
<name>SPO14_YEAST</name>
<accession>P36126</accession>
<accession>D6VX96</accession>
<feature type="initiator methionine" description="Removed" evidence="7 10">
    <location>
        <position position="1"/>
    </location>
</feature>
<feature type="chain" id="PRO_0000218825" description="Phospholipase D1">
    <location>
        <begin position="2"/>
        <end position="1683"/>
    </location>
</feature>
<feature type="domain" description="PX">
    <location>
        <begin position="291"/>
        <end position="487"/>
    </location>
</feature>
<feature type="domain" description="PH">
    <location>
        <begin position="496"/>
        <end position="664"/>
    </location>
</feature>
<feature type="domain" description="PLD phosphodiesterase 1" evidence="1">
    <location>
        <begin position="791"/>
        <end position="818"/>
    </location>
</feature>
<feature type="domain" description="PLD phosphodiesterase 2" evidence="1">
    <location>
        <begin position="1091"/>
        <end position="1118"/>
    </location>
</feature>
<feature type="region of interest" description="Disordered" evidence="2">
    <location>
        <begin position="1"/>
        <end position="150"/>
    </location>
</feature>
<feature type="region of interest" description="Disordered" evidence="2">
    <location>
        <begin position="173"/>
        <end position="198"/>
    </location>
</feature>
<feature type="region of interest" description="Disordered" evidence="2">
    <location>
        <begin position="259"/>
        <end position="289"/>
    </location>
</feature>
<feature type="region of interest" description="Disordered" evidence="2">
    <location>
        <begin position="384"/>
        <end position="416"/>
    </location>
</feature>
<feature type="region of interest" description="Disordered" evidence="2">
    <location>
        <begin position="1430"/>
        <end position="1465"/>
    </location>
</feature>
<feature type="compositionally biased region" description="Basic and acidic residues" evidence="2">
    <location>
        <begin position="20"/>
        <end position="34"/>
    </location>
</feature>
<feature type="compositionally biased region" description="Basic and acidic residues" evidence="2">
    <location>
        <begin position="63"/>
        <end position="82"/>
    </location>
</feature>
<feature type="compositionally biased region" description="Basic and acidic residues" evidence="2">
    <location>
        <begin position="90"/>
        <end position="112"/>
    </location>
</feature>
<feature type="compositionally biased region" description="Low complexity" evidence="2">
    <location>
        <begin position="116"/>
        <end position="125"/>
    </location>
</feature>
<feature type="compositionally biased region" description="Polar residues" evidence="2">
    <location>
        <begin position="141"/>
        <end position="150"/>
    </location>
</feature>
<feature type="compositionally biased region" description="Low complexity" evidence="2">
    <location>
        <begin position="263"/>
        <end position="279"/>
    </location>
</feature>
<feature type="compositionally biased region" description="Polar residues" evidence="2">
    <location>
        <begin position="392"/>
        <end position="404"/>
    </location>
</feature>
<feature type="compositionally biased region" description="Low complexity" evidence="2">
    <location>
        <begin position="405"/>
        <end position="416"/>
    </location>
</feature>
<feature type="compositionally biased region" description="Polar residues" evidence="2">
    <location>
        <begin position="1437"/>
        <end position="1451"/>
    </location>
</feature>
<feature type="active site" evidence="1">
    <location>
        <position position="796"/>
    </location>
</feature>
<feature type="active site" evidence="1">
    <location>
        <position position="798"/>
    </location>
</feature>
<feature type="active site" evidence="1">
    <location>
        <position position="803"/>
    </location>
</feature>
<feature type="active site" evidence="1">
    <location>
        <position position="1096"/>
    </location>
</feature>
<feature type="active site" evidence="1">
    <location>
        <position position="1098"/>
    </location>
</feature>
<feature type="active site" evidence="1">
    <location>
        <position position="1103"/>
    </location>
</feature>
<feature type="modified residue" description="N-acetylserine" evidence="7 10">
    <location>
        <position position="2"/>
    </location>
</feature>
<feature type="modified residue" description="Phosphoserine" evidence="7">
    <location>
        <position position="8"/>
    </location>
</feature>
<feature type="modified residue" description="Phosphoserine" evidence="8 9">
    <location>
        <position position="30"/>
    </location>
</feature>
<feature type="modified residue" description="Phosphoserine" evidence="9">
    <location>
        <position position="145"/>
    </location>
</feature>
<feature type="modified residue" description="Phosphoserine" evidence="9">
    <location>
        <position position="1461"/>
    </location>
</feature>
<feature type="modified residue" description="Phosphothreonine" evidence="9">
    <location>
        <position position="1462"/>
    </location>
</feature>